<name>ENGB_LEGPL</name>
<comment type="function">
    <text evidence="1">Necessary for normal cell division and for the maintenance of normal septation.</text>
</comment>
<comment type="cofactor">
    <cofactor evidence="1">
        <name>Mg(2+)</name>
        <dbReference type="ChEBI" id="CHEBI:18420"/>
    </cofactor>
</comment>
<comment type="similarity">
    <text evidence="1">Belongs to the TRAFAC class TrmE-Era-EngA-EngB-Septin-like GTPase superfamily. EngB GTPase family.</text>
</comment>
<organism>
    <name type="scientific">Legionella pneumophila (strain Lens)</name>
    <dbReference type="NCBI Taxonomy" id="297245"/>
    <lineage>
        <taxon>Bacteria</taxon>
        <taxon>Pseudomonadati</taxon>
        <taxon>Pseudomonadota</taxon>
        <taxon>Gammaproteobacteria</taxon>
        <taxon>Legionellales</taxon>
        <taxon>Legionellaceae</taxon>
        <taxon>Legionella</taxon>
    </lineage>
</organism>
<protein>
    <recommendedName>
        <fullName evidence="1">Probable GTP-binding protein EngB</fullName>
    </recommendedName>
</protein>
<keyword id="KW-0131">Cell cycle</keyword>
<keyword id="KW-0132">Cell division</keyword>
<keyword id="KW-0342">GTP-binding</keyword>
<keyword id="KW-0460">Magnesium</keyword>
<keyword id="KW-0479">Metal-binding</keyword>
<keyword id="KW-0547">Nucleotide-binding</keyword>
<keyword id="KW-0717">Septation</keyword>
<accession>Q5X097</accession>
<reference key="1">
    <citation type="journal article" date="2004" name="Nat. Genet.">
        <title>Evidence in the Legionella pneumophila genome for exploitation of host cell functions and high genome plasticity.</title>
        <authorList>
            <person name="Cazalet C."/>
            <person name="Rusniok C."/>
            <person name="Brueggemann H."/>
            <person name="Zidane N."/>
            <person name="Magnier A."/>
            <person name="Ma L."/>
            <person name="Tichit M."/>
            <person name="Jarraud S."/>
            <person name="Bouchier C."/>
            <person name="Vandenesch F."/>
            <person name="Kunst F."/>
            <person name="Etienne J."/>
            <person name="Glaser P."/>
            <person name="Buchrieser C."/>
        </authorList>
    </citation>
    <scope>NUCLEOTIDE SEQUENCE [LARGE SCALE GENOMIC DNA]</scope>
    <source>
        <strain>Lens</strain>
    </source>
</reference>
<evidence type="ECO:0000255" key="1">
    <source>
        <dbReference type="HAMAP-Rule" id="MF_00321"/>
    </source>
</evidence>
<proteinExistence type="inferred from homology"/>
<gene>
    <name evidence="1" type="primary">engB</name>
    <name type="ordered locus">lpl0124</name>
</gene>
<sequence>MPINLYSKAVFLKSAARVNQLPEDSGYEVAFAGRSNAGKSSALNCLTNNKNLARTSKTPGRTQLINLFSLDEQRRLVDLPGYGYAKVAMEVKLEWQKNLAHYLEARQCLRGLILLMDVRHPLKDLDQILVNWALHRELPVHILLTKADKLSRSEVKNAVLKVRQYYELAEHLVSVQAFSSVKKDGVEELISVLDRWYEWN</sequence>
<feature type="chain" id="PRO_0000266884" description="Probable GTP-binding protein EngB">
    <location>
        <begin position="1"/>
        <end position="200"/>
    </location>
</feature>
<feature type="domain" description="EngB-type G" evidence="1">
    <location>
        <begin position="25"/>
        <end position="199"/>
    </location>
</feature>
<feature type="binding site" evidence="1">
    <location>
        <begin position="33"/>
        <end position="40"/>
    </location>
    <ligand>
        <name>GTP</name>
        <dbReference type="ChEBI" id="CHEBI:37565"/>
    </ligand>
</feature>
<feature type="binding site" evidence="1">
    <location>
        <position position="40"/>
    </location>
    <ligand>
        <name>Mg(2+)</name>
        <dbReference type="ChEBI" id="CHEBI:18420"/>
    </ligand>
</feature>
<feature type="binding site" evidence="1">
    <location>
        <begin position="60"/>
        <end position="64"/>
    </location>
    <ligand>
        <name>GTP</name>
        <dbReference type="ChEBI" id="CHEBI:37565"/>
    </ligand>
</feature>
<feature type="binding site" evidence="1">
    <location>
        <position position="62"/>
    </location>
    <ligand>
        <name>Mg(2+)</name>
        <dbReference type="ChEBI" id="CHEBI:18420"/>
    </ligand>
</feature>
<feature type="binding site" evidence="1">
    <location>
        <begin position="78"/>
        <end position="81"/>
    </location>
    <ligand>
        <name>GTP</name>
        <dbReference type="ChEBI" id="CHEBI:37565"/>
    </ligand>
</feature>
<feature type="binding site" evidence="1">
    <location>
        <begin position="145"/>
        <end position="148"/>
    </location>
    <ligand>
        <name>GTP</name>
        <dbReference type="ChEBI" id="CHEBI:37565"/>
    </ligand>
</feature>
<feature type="binding site" evidence="1">
    <location>
        <begin position="178"/>
        <end position="180"/>
    </location>
    <ligand>
        <name>GTP</name>
        <dbReference type="ChEBI" id="CHEBI:37565"/>
    </ligand>
</feature>
<dbReference type="EMBL" id="CR628337">
    <property type="protein sequence ID" value="CAH14354.1"/>
    <property type="molecule type" value="Genomic_DNA"/>
</dbReference>
<dbReference type="SMR" id="Q5X097"/>
<dbReference type="KEGG" id="lpf:lpl0124"/>
<dbReference type="LegioList" id="lpl0124"/>
<dbReference type="HOGENOM" id="CLU_033732_1_0_6"/>
<dbReference type="Proteomes" id="UP000002517">
    <property type="component" value="Chromosome"/>
</dbReference>
<dbReference type="GO" id="GO:0005829">
    <property type="term" value="C:cytosol"/>
    <property type="evidence" value="ECO:0007669"/>
    <property type="project" value="TreeGrafter"/>
</dbReference>
<dbReference type="GO" id="GO:0005525">
    <property type="term" value="F:GTP binding"/>
    <property type="evidence" value="ECO:0007669"/>
    <property type="project" value="UniProtKB-UniRule"/>
</dbReference>
<dbReference type="GO" id="GO:0046872">
    <property type="term" value="F:metal ion binding"/>
    <property type="evidence" value="ECO:0007669"/>
    <property type="project" value="UniProtKB-KW"/>
</dbReference>
<dbReference type="GO" id="GO:0000917">
    <property type="term" value="P:division septum assembly"/>
    <property type="evidence" value="ECO:0007669"/>
    <property type="project" value="UniProtKB-KW"/>
</dbReference>
<dbReference type="CDD" id="cd01876">
    <property type="entry name" value="YihA_EngB"/>
    <property type="match status" value="1"/>
</dbReference>
<dbReference type="FunFam" id="3.40.50.300:FF:000098">
    <property type="entry name" value="Probable GTP-binding protein EngB"/>
    <property type="match status" value="1"/>
</dbReference>
<dbReference type="Gene3D" id="3.40.50.300">
    <property type="entry name" value="P-loop containing nucleotide triphosphate hydrolases"/>
    <property type="match status" value="1"/>
</dbReference>
<dbReference type="HAMAP" id="MF_00321">
    <property type="entry name" value="GTPase_EngB"/>
    <property type="match status" value="1"/>
</dbReference>
<dbReference type="InterPro" id="IPR030393">
    <property type="entry name" value="G_ENGB_dom"/>
</dbReference>
<dbReference type="InterPro" id="IPR006073">
    <property type="entry name" value="GTP-bd"/>
</dbReference>
<dbReference type="InterPro" id="IPR019987">
    <property type="entry name" value="GTP-bd_ribosome_bio_YsxC"/>
</dbReference>
<dbReference type="InterPro" id="IPR027417">
    <property type="entry name" value="P-loop_NTPase"/>
</dbReference>
<dbReference type="NCBIfam" id="TIGR03598">
    <property type="entry name" value="GTPase_YsxC"/>
    <property type="match status" value="1"/>
</dbReference>
<dbReference type="PANTHER" id="PTHR11649:SF13">
    <property type="entry name" value="ENGB-TYPE G DOMAIN-CONTAINING PROTEIN"/>
    <property type="match status" value="1"/>
</dbReference>
<dbReference type="PANTHER" id="PTHR11649">
    <property type="entry name" value="MSS1/TRME-RELATED GTP-BINDING PROTEIN"/>
    <property type="match status" value="1"/>
</dbReference>
<dbReference type="Pfam" id="PF01926">
    <property type="entry name" value="MMR_HSR1"/>
    <property type="match status" value="1"/>
</dbReference>
<dbReference type="SUPFAM" id="SSF52540">
    <property type="entry name" value="P-loop containing nucleoside triphosphate hydrolases"/>
    <property type="match status" value="1"/>
</dbReference>
<dbReference type="PROSITE" id="PS51706">
    <property type="entry name" value="G_ENGB"/>
    <property type="match status" value="1"/>
</dbReference>